<proteinExistence type="inferred from homology"/>
<gene>
    <name evidence="1" type="primary">katG</name>
    <name type="ordered locus">Daro_3836</name>
</gene>
<sequence>MSNEQKCPFSGTHGARTTVGTQSNRDWWPKVLNLNILHQHAPAANPMDADFDYSETFKTLDFGALKQDLYALMTTSQDWWPADWGHYGGLFIRMAWHSAGTYRTGDGRGGAGTGNQRFAPINSWPDNGNLDKARRLLWPIKQKYGNKISWADLMILAGNCALESMGFKTFGFGGGRVDIWQPEEDIYWGAEREWLATSDKPNSRYSGERNLDNPLAAVQMGLIYVNPEGPDGNPDPVASGRDIRETFARMAMNDEETVALTAGGHTFGKAHGAGDPALVGPEPEAAPIEEQGLGWINKFGSGKGIHATTSGIEGAWKPNPTKWDNGYFDMLFGYEWELTRSPAGAKQWVAKDCKPEHLIPDAHDPSKKHPPMMTTADLAMRFDPIYGPISRRFHQDPAAFADAFARAWFKLTHRDLGPKARYLGPEVPAEDLVWQDPIPAVDHPLIEVTDVASLKAKLLASGLSTAELVSTAWASASTFRGSDKRGGANGARIRLAPQKDWAANQPAQLAKVLGVLEGIQQAFNSAQTGGKKVSLADLIVLGGCAAVEAAAKAAGFAVAVPFTPGRTDASQEQTDAESIAVLEPEADGFRNYQKKTYSVSAEEMLVDKAQLLTLSAPEMTVLVGGLRVLGGNVGGSSDGVFTTTPGTLSNDFFVNLLDMGTVWKPAAESAGRYEGRDRQTGVAKWTASRVDLIFGSNSQLRALAEVYAQNDAQEKFVRDFIAAWSKVMELDRFDLK</sequence>
<dbReference type="EC" id="1.11.1.21" evidence="1"/>
<dbReference type="EMBL" id="CP000089">
    <property type="protein sequence ID" value="AAZ48564.1"/>
    <property type="molecule type" value="Genomic_DNA"/>
</dbReference>
<dbReference type="SMR" id="Q479B7"/>
<dbReference type="STRING" id="159087.Daro_3836"/>
<dbReference type="PeroxiBase" id="2367">
    <property type="entry name" value="DarCP01_RCB"/>
</dbReference>
<dbReference type="KEGG" id="dar:Daro_3836"/>
<dbReference type="eggNOG" id="COG0376">
    <property type="taxonomic scope" value="Bacteria"/>
</dbReference>
<dbReference type="HOGENOM" id="CLU_025424_2_0_4"/>
<dbReference type="OrthoDB" id="9759743at2"/>
<dbReference type="GO" id="GO:0005829">
    <property type="term" value="C:cytosol"/>
    <property type="evidence" value="ECO:0007669"/>
    <property type="project" value="TreeGrafter"/>
</dbReference>
<dbReference type="GO" id="GO:0004096">
    <property type="term" value="F:catalase activity"/>
    <property type="evidence" value="ECO:0007669"/>
    <property type="project" value="UniProtKB-UniRule"/>
</dbReference>
<dbReference type="GO" id="GO:0020037">
    <property type="term" value="F:heme binding"/>
    <property type="evidence" value="ECO:0007669"/>
    <property type="project" value="InterPro"/>
</dbReference>
<dbReference type="GO" id="GO:0046872">
    <property type="term" value="F:metal ion binding"/>
    <property type="evidence" value="ECO:0007669"/>
    <property type="project" value="UniProtKB-KW"/>
</dbReference>
<dbReference type="GO" id="GO:0070301">
    <property type="term" value="P:cellular response to hydrogen peroxide"/>
    <property type="evidence" value="ECO:0007669"/>
    <property type="project" value="TreeGrafter"/>
</dbReference>
<dbReference type="GO" id="GO:0042744">
    <property type="term" value="P:hydrogen peroxide catabolic process"/>
    <property type="evidence" value="ECO:0007669"/>
    <property type="project" value="UniProtKB-KW"/>
</dbReference>
<dbReference type="CDD" id="cd00649">
    <property type="entry name" value="catalase_peroxidase_1"/>
    <property type="match status" value="1"/>
</dbReference>
<dbReference type="CDD" id="cd08200">
    <property type="entry name" value="catalase_peroxidase_2"/>
    <property type="match status" value="1"/>
</dbReference>
<dbReference type="FunFam" id="1.10.420.10:FF:000002">
    <property type="entry name" value="Catalase-peroxidase"/>
    <property type="match status" value="1"/>
</dbReference>
<dbReference type="FunFam" id="1.10.420.10:FF:000004">
    <property type="entry name" value="Catalase-peroxidase"/>
    <property type="match status" value="1"/>
</dbReference>
<dbReference type="FunFam" id="1.10.520.10:FF:000002">
    <property type="entry name" value="Catalase-peroxidase"/>
    <property type="match status" value="1"/>
</dbReference>
<dbReference type="Gene3D" id="1.10.520.10">
    <property type="match status" value="2"/>
</dbReference>
<dbReference type="Gene3D" id="1.10.420.10">
    <property type="entry name" value="Peroxidase, domain 2"/>
    <property type="match status" value="2"/>
</dbReference>
<dbReference type="HAMAP" id="MF_01961">
    <property type="entry name" value="Catal_peroxid"/>
    <property type="match status" value="1"/>
</dbReference>
<dbReference type="InterPro" id="IPR000763">
    <property type="entry name" value="Catalase_peroxidase"/>
</dbReference>
<dbReference type="InterPro" id="IPR002016">
    <property type="entry name" value="Haem_peroxidase"/>
</dbReference>
<dbReference type="InterPro" id="IPR010255">
    <property type="entry name" value="Haem_peroxidase_sf"/>
</dbReference>
<dbReference type="InterPro" id="IPR019794">
    <property type="entry name" value="Peroxidases_AS"/>
</dbReference>
<dbReference type="NCBIfam" id="TIGR00198">
    <property type="entry name" value="cat_per_HPI"/>
    <property type="match status" value="1"/>
</dbReference>
<dbReference type="NCBIfam" id="NF011635">
    <property type="entry name" value="PRK15061.1"/>
    <property type="match status" value="1"/>
</dbReference>
<dbReference type="PANTHER" id="PTHR30555:SF0">
    <property type="entry name" value="CATALASE-PEROXIDASE"/>
    <property type="match status" value="1"/>
</dbReference>
<dbReference type="PANTHER" id="PTHR30555">
    <property type="entry name" value="HYDROPEROXIDASE I, BIFUNCTIONAL CATALASE-PEROXIDASE"/>
    <property type="match status" value="1"/>
</dbReference>
<dbReference type="Pfam" id="PF00141">
    <property type="entry name" value="peroxidase"/>
    <property type="match status" value="2"/>
</dbReference>
<dbReference type="PRINTS" id="PR00460">
    <property type="entry name" value="BPEROXIDASE"/>
</dbReference>
<dbReference type="PRINTS" id="PR00458">
    <property type="entry name" value="PEROXIDASE"/>
</dbReference>
<dbReference type="SUPFAM" id="SSF48113">
    <property type="entry name" value="Heme-dependent peroxidases"/>
    <property type="match status" value="2"/>
</dbReference>
<dbReference type="PROSITE" id="PS00436">
    <property type="entry name" value="PEROXIDASE_2"/>
    <property type="match status" value="1"/>
</dbReference>
<dbReference type="PROSITE" id="PS50873">
    <property type="entry name" value="PEROXIDASE_4"/>
    <property type="match status" value="1"/>
</dbReference>
<name>KATG_DECAR</name>
<evidence type="ECO:0000255" key="1">
    <source>
        <dbReference type="HAMAP-Rule" id="MF_01961"/>
    </source>
</evidence>
<evidence type="ECO:0000256" key="2">
    <source>
        <dbReference type="SAM" id="MobiDB-lite"/>
    </source>
</evidence>
<organism>
    <name type="scientific">Dechloromonas aromatica (strain RCB)</name>
    <dbReference type="NCBI Taxonomy" id="159087"/>
    <lineage>
        <taxon>Bacteria</taxon>
        <taxon>Pseudomonadati</taxon>
        <taxon>Pseudomonadota</taxon>
        <taxon>Betaproteobacteria</taxon>
        <taxon>Rhodocyclales</taxon>
        <taxon>Azonexaceae</taxon>
        <taxon>Dechloromonas</taxon>
    </lineage>
</organism>
<protein>
    <recommendedName>
        <fullName evidence="1">Catalase-peroxidase</fullName>
        <shortName evidence="1">CP</shortName>
        <ecNumber evidence="1">1.11.1.21</ecNumber>
    </recommendedName>
    <alternativeName>
        <fullName evidence="1">Peroxidase/catalase</fullName>
    </alternativeName>
</protein>
<keyword id="KW-0349">Heme</keyword>
<keyword id="KW-0376">Hydrogen peroxide</keyword>
<keyword id="KW-0408">Iron</keyword>
<keyword id="KW-0479">Metal-binding</keyword>
<keyword id="KW-0560">Oxidoreductase</keyword>
<keyword id="KW-0575">Peroxidase</keyword>
<feature type="chain" id="PRO_0000354766" description="Catalase-peroxidase">
    <location>
        <begin position="1"/>
        <end position="736"/>
    </location>
</feature>
<feature type="region of interest" description="Disordered" evidence="2">
    <location>
        <begin position="1"/>
        <end position="21"/>
    </location>
</feature>
<feature type="active site" description="Proton acceptor" evidence="1">
    <location>
        <position position="97"/>
    </location>
</feature>
<feature type="binding site" description="axial binding residue" evidence="1">
    <location>
        <position position="265"/>
    </location>
    <ligand>
        <name>heme b</name>
        <dbReference type="ChEBI" id="CHEBI:60344"/>
    </ligand>
    <ligandPart>
        <name>Fe</name>
        <dbReference type="ChEBI" id="CHEBI:18248"/>
    </ligandPart>
</feature>
<feature type="site" description="Transition state stabilizer" evidence="1">
    <location>
        <position position="93"/>
    </location>
</feature>
<feature type="cross-link" description="Tryptophyl-tyrosyl-methioninium (Trp-Tyr) (with M-250)" evidence="1">
    <location>
        <begin position="96"/>
        <end position="224"/>
    </location>
</feature>
<feature type="cross-link" description="Tryptophyl-tyrosyl-methioninium (Tyr-Met) (with W-96)" evidence="1">
    <location>
        <begin position="224"/>
        <end position="250"/>
    </location>
</feature>
<accession>Q479B7</accession>
<reference key="1">
    <citation type="journal article" date="2009" name="BMC Genomics">
        <title>Metabolic analysis of the soil microbe Dechloromonas aromatica str. RCB: indications of a surprisingly complex life-style and cryptic anaerobic pathways for aromatic degradation.</title>
        <authorList>
            <person name="Salinero K.K."/>
            <person name="Keller K."/>
            <person name="Feil W.S."/>
            <person name="Feil H."/>
            <person name="Trong S."/>
            <person name="Di Bartolo G."/>
            <person name="Lapidus A."/>
        </authorList>
    </citation>
    <scope>NUCLEOTIDE SEQUENCE [LARGE SCALE GENOMIC DNA]</scope>
    <source>
        <strain>RCB</strain>
    </source>
</reference>
<comment type="function">
    <text evidence="1">Bifunctional enzyme with both catalase and broad-spectrum peroxidase activity.</text>
</comment>
<comment type="catalytic activity">
    <reaction evidence="1">
        <text>H2O2 + AH2 = A + 2 H2O</text>
        <dbReference type="Rhea" id="RHEA:30275"/>
        <dbReference type="ChEBI" id="CHEBI:13193"/>
        <dbReference type="ChEBI" id="CHEBI:15377"/>
        <dbReference type="ChEBI" id="CHEBI:16240"/>
        <dbReference type="ChEBI" id="CHEBI:17499"/>
        <dbReference type="EC" id="1.11.1.21"/>
    </reaction>
</comment>
<comment type="catalytic activity">
    <reaction evidence="1">
        <text>2 H2O2 = O2 + 2 H2O</text>
        <dbReference type="Rhea" id="RHEA:20309"/>
        <dbReference type="ChEBI" id="CHEBI:15377"/>
        <dbReference type="ChEBI" id="CHEBI:15379"/>
        <dbReference type="ChEBI" id="CHEBI:16240"/>
        <dbReference type="EC" id="1.11.1.21"/>
    </reaction>
</comment>
<comment type="cofactor">
    <cofactor evidence="1">
        <name>heme b</name>
        <dbReference type="ChEBI" id="CHEBI:60344"/>
    </cofactor>
    <text evidence="1">Binds 1 heme b (iron(II)-protoporphyrin IX) group per dimer.</text>
</comment>
<comment type="subunit">
    <text evidence="1">Homodimer or homotetramer.</text>
</comment>
<comment type="PTM">
    <text evidence="1">Formation of the three residue Trp-Tyr-Met cross-link is important for the catalase, but not the peroxidase activity of the enzyme.</text>
</comment>
<comment type="similarity">
    <text evidence="1">Belongs to the peroxidase family. Peroxidase/catalase subfamily.</text>
</comment>